<comment type="induction">
    <text evidence="3">Expressed in both low and standard phosphate concentrations.</text>
</comment>
<comment type="similarity">
    <text evidence="4">Belongs to the mycobacterial PE family. PGRS subfamily.</text>
</comment>
<organism>
    <name type="scientific">Mycobacterium tuberculosis (strain ATCC 25618 / H37Rv)</name>
    <dbReference type="NCBI Taxonomy" id="83332"/>
    <lineage>
        <taxon>Bacteria</taxon>
        <taxon>Bacillati</taxon>
        <taxon>Actinomycetota</taxon>
        <taxon>Actinomycetes</taxon>
        <taxon>Mycobacteriales</taxon>
        <taxon>Mycobacteriaceae</taxon>
        <taxon>Mycobacterium</taxon>
        <taxon>Mycobacterium tuberculosis complex</taxon>
    </lineage>
</organism>
<name>PG04_MYCTU</name>
<dbReference type="EMBL" id="AL123456">
    <property type="protein sequence ID" value="CCP43009.1"/>
    <property type="molecule type" value="Genomic_DNA"/>
</dbReference>
<dbReference type="RefSeq" id="WP_010886072.1">
    <property type="nucleotide sequence ID" value="NC_000962.3"/>
</dbReference>
<dbReference type="RefSeq" id="YP_177708.1">
    <property type="nucleotide sequence ID" value="NC_000962.3"/>
</dbReference>
<dbReference type="STRING" id="83332.Rv0279c"/>
<dbReference type="PaxDb" id="83332-Rv0279c"/>
<dbReference type="GeneID" id="886621"/>
<dbReference type="KEGG" id="mtu:Rv0279c"/>
<dbReference type="PATRIC" id="fig|83332.12.peg.311"/>
<dbReference type="TubercuList" id="Rv0279c"/>
<dbReference type="eggNOG" id="COG0657">
    <property type="taxonomic scope" value="Bacteria"/>
</dbReference>
<dbReference type="InParanoid" id="L0T4W6"/>
<dbReference type="OrthoDB" id="4753956at2"/>
<dbReference type="Proteomes" id="UP000001584">
    <property type="component" value="Chromosome"/>
</dbReference>
<dbReference type="Gene3D" id="1.10.287.850">
    <property type="entry name" value="HP0062-like domain"/>
    <property type="match status" value="1"/>
</dbReference>
<dbReference type="InterPro" id="IPR000084">
    <property type="entry name" value="PE-PGRS_N"/>
</dbReference>
<dbReference type="Pfam" id="PF00934">
    <property type="entry name" value="PE"/>
    <property type="match status" value="1"/>
</dbReference>
<dbReference type="PRINTS" id="PR01228">
    <property type="entry name" value="EGGSHELL"/>
</dbReference>
<dbReference type="SUPFAM" id="SSF140459">
    <property type="entry name" value="PE/PPE dimer-like"/>
    <property type="match status" value="1"/>
</dbReference>
<gene>
    <name evidence="5" type="primary">PE_PGRS4</name>
    <name evidence="5" type="ordered locus">Rv0279c</name>
</gene>
<reference key="1">
    <citation type="journal article" date="1998" name="Nature">
        <title>Deciphering the biology of Mycobacterium tuberculosis from the complete genome sequence.</title>
        <authorList>
            <person name="Cole S.T."/>
            <person name="Brosch R."/>
            <person name="Parkhill J."/>
            <person name="Garnier T."/>
            <person name="Churcher C.M."/>
            <person name="Harris D.E."/>
            <person name="Gordon S.V."/>
            <person name="Eiglmeier K."/>
            <person name="Gas S."/>
            <person name="Barry C.E. III"/>
            <person name="Tekaia F."/>
            <person name="Badcock K."/>
            <person name="Basham D."/>
            <person name="Brown D."/>
            <person name="Chillingworth T."/>
            <person name="Connor R."/>
            <person name="Davies R.M."/>
            <person name="Devlin K."/>
            <person name="Feltwell T."/>
            <person name="Gentles S."/>
            <person name="Hamlin N."/>
            <person name="Holroyd S."/>
            <person name="Hornsby T."/>
            <person name="Jagels K."/>
            <person name="Krogh A."/>
            <person name="McLean J."/>
            <person name="Moule S."/>
            <person name="Murphy L.D."/>
            <person name="Oliver S."/>
            <person name="Osborne J."/>
            <person name="Quail M.A."/>
            <person name="Rajandream M.A."/>
            <person name="Rogers J."/>
            <person name="Rutter S."/>
            <person name="Seeger K."/>
            <person name="Skelton S."/>
            <person name="Squares S."/>
            <person name="Squares R."/>
            <person name="Sulston J.E."/>
            <person name="Taylor K."/>
            <person name="Whitehead S."/>
            <person name="Barrell B.G."/>
        </authorList>
    </citation>
    <scope>NUCLEOTIDE SEQUENCE [LARGE SCALE GENOMIC DNA]</scope>
    <source>
        <strain>ATCC 25618 / H37Rv</strain>
    </source>
</reference>
<reference key="2">
    <citation type="journal article" date="2018" name="Cell. Microbiol.">
        <title>PE_PGRS3 of Mycobacterium tuberculosis is specifically expressed at low phosphate concentration, and its arginine-rich C-terminal domain mediates adhesion and persistence in host tissues when expressed in Mycobacterium smegmatis.</title>
        <authorList>
            <person name="De Maio F."/>
            <person name="Battah B."/>
            <person name="Palmieri V."/>
            <person name="Petrone L."/>
            <person name="Corrente F."/>
            <person name="Salustri A."/>
            <person name="Palucci I."/>
            <person name="Bellesi S."/>
            <person name="Papi M."/>
            <person name="Rubino S."/>
            <person name="Sali M."/>
            <person name="Goletti D."/>
            <person name="Sanguinetti M."/>
            <person name="Manganelli R."/>
            <person name="De Spirito M."/>
            <person name="Delogu G."/>
        </authorList>
    </citation>
    <scope>INDUCTION</scope>
    <source>
        <strain>H37Rv</strain>
    </source>
</reference>
<protein>
    <recommendedName>
        <fullName evidence="4">PE-PGRS family protein PE_PGRS4</fullName>
    </recommendedName>
</protein>
<keyword id="KW-1185">Reference proteome</keyword>
<keyword id="KW-0677">Repeat</keyword>
<sequence>MSFVIAAPEVIAAAATDLASLESSIAAANAAAAANTTALLAAGADEVSTAVAALFGAHGQAYQALSAQAQAFHAQFVQALTSGGGAYAAAEAAATSPLLAPINEFFLANTGRPLIGNGTNGAPGTGANGGDGGWLIGNGGAGGSGAAGVNGGAGGNGGAGGLIGNGGAGGAGGRASTGTGGAGGAGGAAGMLFGAAGVGGPGGFAAAFGATGGAGGAGGNGGLFADGGVGGAGGATDAGTGGAGGSGGNGGLFGAGGTGGPGGFGIFGGGAGGDGGSGGLFGAGGTGGSGGTSIINVGGNGGAGGDAGMLSLGAAGGAGGSGGSNPDGGGGAGGIGGDGGTLFGSGGAGGVCGLGFDAGGAGGAGGKAGLLIGAGGAGGAGGGSFAGAGGTGGAGGAPGLVGNAGNGGNGGASANGAGAAGGAGGSGVLIGNGGNGGSGGTGAPAGTAGAGGLGGQLLGRDGFNAPASTPLHTLQQQILNAINEPTQALTGRPLIGNGANGTPGTGADGGAGGWLFGNGGNGGHGATGADGGDGGSGGAGGILSGIGGTGGSGGIGTTGQGGTGGTGGAALLIGSGGTGGSGGFGLDTGGAGGRGGDAGLFLGAAGTGGQAALSQNFIGAGGTAGAGGTGGLFANGGAGGAGGFGANGGTGGNGLLFGAGGTGGAGTLGADGGAGGHGGLFGAGGTGGAGGSSGGTFGGNGGSGGNAGLLALGASGGAGGSGGSALNVGGTGGVGGNGGSGGSLFGFGGAGGTGGSSGIGSSGGTGGDGGTAGVFGNGGDGGAGGFGADTGGNSSSVPNAVLIGNGGNGGNGGKAGGTPGAGGTSGLIIGENGLNGL</sequence>
<accession>L0T4W6</accession>
<evidence type="ECO:0000255" key="1"/>
<evidence type="ECO:0000256" key="2">
    <source>
        <dbReference type="SAM" id="MobiDB-lite"/>
    </source>
</evidence>
<evidence type="ECO:0000269" key="3">
    <source>
    </source>
</evidence>
<evidence type="ECO:0000305" key="4"/>
<evidence type="ECO:0000312" key="5">
    <source>
        <dbReference type="EMBL" id="CCP43009.1"/>
    </source>
</evidence>
<proteinExistence type="evidence at transcript level"/>
<feature type="chain" id="PRO_0000458021" description="PE-PGRS family protein PE_PGRS4">
    <location>
        <begin position="1"/>
        <end position="837"/>
    </location>
</feature>
<feature type="domain" description="PE" evidence="1">
    <location>
        <begin position="4"/>
        <end position="94"/>
    </location>
</feature>
<feature type="region of interest" description="Disordered" evidence="2">
    <location>
        <begin position="811"/>
        <end position="837"/>
    </location>
</feature>
<feature type="compositionally biased region" description="Gly residues" evidence="2">
    <location>
        <begin position="811"/>
        <end position="825"/>
    </location>
</feature>
<feature type="compositionally biased region" description="Low complexity" evidence="2">
    <location>
        <begin position="826"/>
        <end position="837"/>
    </location>
</feature>